<evidence type="ECO:0000255" key="1">
    <source>
        <dbReference type="HAMAP-Rule" id="MF_00272"/>
    </source>
</evidence>
<evidence type="ECO:0000255" key="2">
    <source>
        <dbReference type="PROSITE-ProRule" id="PRU01066"/>
    </source>
</evidence>
<proteinExistence type="inferred from homology"/>
<dbReference type="EMBL" id="CP000557">
    <property type="protein sequence ID" value="ABO68301.1"/>
    <property type="molecule type" value="Genomic_DNA"/>
</dbReference>
<dbReference type="RefSeq" id="WP_008880240.1">
    <property type="nucleotide sequence ID" value="NC_009328.1"/>
</dbReference>
<dbReference type="SMR" id="A4ISJ7"/>
<dbReference type="GeneID" id="87622897"/>
<dbReference type="KEGG" id="gtn:GTNG_2956"/>
<dbReference type="eggNOG" id="COG0509">
    <property type="taxonomic scope" value="Bacteria"/>
</dbReference>
<dbReference type="HOGENOM" id="CLU_097408_2_2_9"/>
<dbReference type="Proteomes" id="UP000001578">
    <property type="component" value="Chromosome"/>
</dbReference>
<dbReference type="GO" id="GO:0005829">
    <property type="term" value="C:cytosol"/>
    <property type="evidence" value="ECO:0007669"/>
    <property type="project" value="TreeGrafter"/>
</dbReference>
<dbReference type="GO" id="GO:0005960">
    <property type="term" value="C:glycine cleavage complex"/>
    <property type="evidence" value="ECO:0007669"/>
    <property type="project" value="InterPro"/>
</dbReference>
<dbReference type="GO" id="GO:0019464">
    <property type="term" value="P:glycine decarboxylation via glycine cleavage system"/>
    <property type="evidence" value="ECO:0007669"/>
    <property type="project" value="UniProtKB-UniRule"/>
</dbReference>
<dbReference type="CDD" id="cd06848">
    <property type="entry name" value="GCS_H"/>
    <property type="match status" value="1"/>
</dbReference>
<dbReference type="Gene3D" id="2.40.50.100">
    <property type="match status" value="1"/>
</dbReference>
<dbReference type="HAMAP" id="MF_00272">
    <property type="entry name" value="GcvH"/>
    <property type="match status" value="1"/>
</dbReference>
<dbReference type="InterPro" id="IPR003016">
    <property type="entry name" value="2-oxoA_DH_lipoyl-BS"/>
</dbReference>
<dbReference type="InterPro" id="IPR000089">
    <property type="entry name" value="Biotin_lipoyl"/>
</dbReference>
<dbReference type="InterPro" id="IPR002930">
    <property type="entry name" value="GCV_H"/>
</dbReference>
<dbReference type="InterPro" id="IPR033753">
    <property type="entry name" value="GCV_H/Fam206"/>
</dbReference>
<dbReference type="InterPro" id="IPR017453">
    <property type="entry name" value="GCV_H_sub"/>
</dbReference>
<dbReference type="InterPro" id="IPR011053">
    <property type="entry name" value="Single_hybrid_motif"/>
</dbReference>
<dbReference type="NCBIfam" id="TIGR00527">
    <property type="entry name" value="gcvH"/>
    <property type="match status" value="1"/>
</dbReference>
<dbReference type="NCBIfam" id="NF002270">
    <property type="entry name" value="PRK01202.1"/>
    <property type="match status" value="1"/>
</dbReference>
<dbReference type="PANTHER" id="PTHR11715">
    <property type="entry name" value="GLYCINE CLEAVAGE SYSTEM H PROTEIN"/>
    <property type="match status" value="1"/>
</dbReference>
<dbReference type="PANTHER" id="PTHR11715:SF3">
    <property type="entry name" value="GLYCINE CLEAVAGE SYSTEM H PROTEIN-RELATED"/>
    <property type="match status" value="1"/>
</dbReference>
<dbReference type="Pfam" id="PF01597">
    <property type="entry name" value="GCV_H"/>
    <property type="match status" value="1"/>
</dbReference>
<dbReference type="SUPFAM" id="SSF51230">
    <property type="entry name" value="Single hybrid motif"/>
    <property type="match status" value="1"/>
</dbReference>
<dbReference type="PROSITE" id="PS50968">
    <property type="entry name" value="BIOTINYL_LIPOYL"/>
    <property type="match status" value="1"/>
</dbReference>
<dbReference type="PROSITE" id="PS00189">
    <property type="entry name" value="LIPOYL"/>
    <property type="match status" value="1"/>
</dbReference>
<reference key="1">
    <citation type="journal article" date="2007" name="Proc. Natl. Acad. Sci. U.S.A.">
        <title>Genome and proteome of long-chain alkane degrading Geobacillus thermodenitrificans NG80-2 isolated from a deep-subsurface oil reservoir.</title>
        <authorList>
            <person name="Feng L."/>
            <person name="Wang W."/>
            <person name="Cheng J."/>
            <person name="Ren Y."/>
            <person name="Zhao G."/>
            <person name="Gao C."/>
            <person name="Tang Y."/>
            <person name="Liu X."/>
            <person name="Han W."/>
            <person name="Peng X."/>
            <person name="Liu R."/>
            <person name="Wang L."/>
        </authorList>
    </citation>
    <scope>NUCLEOTIDE SEQUENCE [LARGE SCALE GENOMIC DNA]</scope>
    <source>
        <strain>NG80-2</strain>
    </source>
</reference>
<comment type="function">
    <text evidence="1">The glycine cleavage system catalyzes the degradation of glycine. The H protein shuttles the methylamine group of glycine from the P protein to the T protein.</text>
</comment>
<comment type="function">
    <text evidence="1">Is also involved in protein lipoylation via its role as an octanoyl/lipoyl carrier protein intermediate.</text>
</comment>
<comment type="cofactor">
    <cofactor evidence="1">
        <name>(R)-lipoate</name>
        <dbReference type="ChEBI" id="CHEBI:83088"/>
    </cofactor>
    <text evidence="1">Binds 1 lipoyl cofactor covalently.</text>
</comment>
<comment type="subunit">
    <text evidence="1">The glycine cleavage system is composed of four proteins: P, T, L and H.</text>
</comment>
<comment type="similarity">
    <text evidence="1">Belongs to the GcvH family.</text>
</comment>
<gene>
    <name evidence="1" type="primary">gcvH</name>
    <name type="ordered locus">GTNG_2956</name>
</gene>
<organism>
    <name type="scientific">Geobacillus thermodenitrificans (strain NG80-2)</name>
    <dbReference type="NCBI Taxonomy" id="420246"/>
    <lineage>
        <taxon>Bacteria</taxon>
        <taxon>Bacillati</taxon>
        <taxon>Bacillota</taxon>
        <taxon>Bacilli</taxon>
        <taxon>Bacillales</taxon>
        <taxon>Anoxybacillaceae</taxon>
        <taxon>Geobacillus</taxon>
    </lineage>
</organism>
<accession>A4ISJ7</accession>
<protein>
    <recommendedName>
        <fullName evidence="1">Glycine cleavage system H protein</fullName>
    </recommendedName>
    <alternativeName>
        <fullName evidence="1">Octanoyl/lipoyl carrier protein</fullName>
    </alternativeName>
</protein>
<sequence>MNTPKELRYSKEHEWVRVEGDKVRIGITDFAQSELGDIVFVELPEVGTEITANEPFGSVESVKTVSELYAPISGTIVEVNESLNDNPEYVNESPYEKAWMIVIEPKDLSEVDNLLTAEQYAAMVNEG</sequence>
<keyword id="KW-0450">Lipoyl</keyword>
<name>GCSH_GEOTN</name>
<feature type="chain" id="PRO_0000302378" description="Glycine cleavage system H protein">
    <location>
        <begin position="1"/>
        <end position="127"/>
    </location>
</feature>
<feature type="domain" description="Lipoyl-binding" evidence="2">
    <location>
        <begin position="22"/>
        <end position="104"/>
    </location>
</feature>
<feature type="modified residue" description="N6-lipoyllysine" evidence="1">
    <location>
        <position position="63"/>
    </location>
</feature>